<dbReference type="EMBL" id="X13293">
    <property type="protein sequence ID" value="CAA31655.1"/>
    <property type="molecule type" value="mRNA"/>
</dbReference>
<dbReference type="EMBL" id="AK303249">
    <property type="protein sequence ID" value="BAH13925.1"/>
    <property type="molecule type" value="mRNA"/>
</dbReference>
<dbReference type="EMBL" id="AK314791">
    <property type="protein sequence ID" value="BAG37322.1"/>
    <property type="molecule type" value="mRNA"/>
</dbReference>
<dbReference type="EMBL" id="AK223482">
    <property type="protein sequence ID" value="BAD97202.1"/>
    <property type="molecule type" value="mRNA"/>
</dbReference>
<dbReference type="EMBL" id="AL121886">
    <property type="status" value="NOT_ANNOTATED_CDS"/>
    <property type="molecule type" value="Genomic_DNA"/>
</dbReference>
<dbReference type="EMBL" id="CH471077">
    <property type="protein sequence ID" value="EAW75951.1"/>
    <property type="molecule type" value="Genomic_DNA"/>
</dbReference>
<dbReference type="EMBL" id="BC007585">
    <property type="protein sequence ID" value="AAH07585.1"/>
    <property type="molecule type" value="mRNA"/>
</dbReference>
<dbReference type="EMBL" id="BC053555">
    <property type="protein sequence ID" value="AAH53555.1"/>
    <property type="molecule type" value="mRNA"/>
</dbReference>
<dbReference type="CCDS" id="CCDS13322.1">
    <molecule id="P10244-1"/>
</dbReference>
<dbReference type="CCDS" id="CCDS63276.1">
    <molecule id="P10244-2"/>
</dbReference>
<dbReference type="PIR" id="S01991">
    <property type="entry name" value="S01991"/>
</dbReference>
<dbReference type="RefSeq" id="NP_001265539.1">
    <molecule id="P10244-2"/>
    <property type="nucleotide sequence ID" value="NM_001278610.2"/>
</dbReference>
<dbReference type="RefSeq" id="NP_002457.1">
    <molecule id="P10244-1"/>
    <property type="nucleotide sequence ID" value="NM_002466.4"/>
</dbReference>
<dbReference type="PDB" id="6C48">
    <property type="method" value="X-ray"/>
    <property type="resolution" value="2.32 A"/>
    <property type="chains" value="C/F=657-688"/>
</dbReference>
<dbReference type="PDBsum" id="6C48"/>
<dbReference type="BMRB" id="P10244"/>
<dbReference type="SMR" id="P10244"/>
<dbReference type="BioGRID" id="110690">
    <property type="interactions" value="155"/>
</dbReference>
<dbReference type="ComplexPortal" id="CPX-2366">
    <property type="entry name" value="Myb-MuvB transcriptional activation complex"/>
</dbReference>
<dbReference type="ComplexPortal" id="CPX-7462">
    <property type="entry name" value="Myb-MuvB-FOXM1 transcriptional activation complex"/>
</dbReference>
<dbReference type="CORUM" id="P10244"/>
<dbReference type="FunCoup" id="P10244">
    <property type="interactions" value="2490"/>
</dbReference>
<dbReference type="IntAct" id="P10244">
    <property type="interactions" value="54"/>
</dbReference>
<dbReference type="MINT" id="P10244"/>
<dbReference type="STRING" id="9606.ENSP00000217026"/>
<dbReference type="GlyGen" id="P10244">
    <property type="glycosylation" value="1 site, 1 O-linked glycan (1 site)"/>
</dbReference>
<dbReference type="iPTMnet" id="P10244"/>
<dbReference type="PhosphoSitePlus" id="P10244"/>
<dbReference type="BioMuta" id="MYBL2"/>
<dbReference type="DMDM" id="127584"/>
<dbReference type="jPOST" id="P10244"/>
<dbReference type="MassIVE" id="P10244"/>
<dbReference type="PaxDb" id="9606-ENSP00000217026"/>
<dbReference type="PeptideAtlas" id="P10244"/>
<dbReference type="ProteomicsDB" id="29817"/>
<dbReference type="ProteomicsDB" id="52586">
    <molecule id="P10244-1"/>
</dbReference>
<dbReference type="Pumba" id="P10244"/>
<dbReference type="Antibodypedia" id="4478">
    <property type="antibodies" value="403 antibodies from 39 providers"/>
</dbReference>
<dbReference type="DNASU" id="4605"/>
<dbReference type="Ensembl" id="ENST00000217026.5">
    <molecule id="P10244-1"/>
    <property type="protein sequence ID" value="ENSP00000217026.4"/>
    <property type="gene ID" value="ENSG00000101057.16"/>
</dbReference>
<dbReference type="Ensembl" id="ENST00000396863.8">
    <molecule id="P10244-2"/>
    <property type="protein sequence ID" value="ENSP00000380072.4"/>
    <property type="gene ID" value="ENSG00000101057.16"/>
</dbReference>
<dbReference type="GeneID" id="4605"/>
<dbReference type="KEGG" id="hsa:4605"/>
<dbReference type="MANE-Select" id="ENST00000217026.5">
    <property type="protein sequence ID" value="ENSP00000217026.4"/>
    <property type="RefSeq nucleotide sequence ID" value="NM_002466.4"/>
    <property type="RefSeq protein sequence ID" value="NP_002457.1"/>
</dbReference>
<dbReference type="UCSC" id="uc002xlb.3">
    <molecule id="P10244-1"/>
    <property type="organism name" value="human"/>
</dbReference>
<dbReference type="AGR" id="HGNC:7548"/>
<dbReference type="CTD" id="4605"/>
<dbReference type="DisGeNET" id="4605"/>
<dbReference type="GeneCards" id="MYBL2"/>
<dbReference type="HGNC" id="HGNC:7548">
    <property type="gene designation" value="MYBL2"/>
</dbReference>
<dbReference type="HPA" id="ENSG00000101057">
    <property type="expression patterns" value="Group enriched (bone marrow, lymphoid tissue)"/>
</dbReference>
<dbReference type="MIM" id="601415">
    <property type="type" value="gene"/>
</dbReference>
<dbReference type="neXtProt" id="NX_P10244"/>
<dbReference type="OpenTargets" id="ENSG00000101057"/>
<dbReference type="PharmGKB" id="PA31348"/>
<dbReference type="VEuPathDB" id="HostDB:ENSG00000101057"/>
<dbReference type="eggNOG" id="KOG0048">
    <property type="taxonomic scope" value="Eukaryota"/>
</dbReference>
<dbReference type="GeneTree" id="ENSGT00940000156091"/>
<dbReference type="HOGENOM" id="CLU_015440_1_0_1"/>
<dbReference type="InParanoid" id="P10244"/>
<dbReference type="OMA" id="EFPKQED"/>
<dbReference type="OrthoDB" id="2143914at2759"/>
<dbReference type="PAN-GO" id="P10244">
    <property type="GO annotations" value="5 GO annotations based on evolutionary models"/>
</dbReference>
<dbReference type="PhylomeDB" id="P10244"/>
<dbReference type="TreeFam" id="TF326257"/>
<dbReference type="PathwayCommons" id="P10244"/>
<dbReference type="Reactome" id="R-HSA-1362300">
    <property type="pathway name" value="Transcription of E2F targets under negative control by p107 (RBL1) and p130 (RBL2) in complex with HDAC1"/>
</dbReference>
<dbReference type="Reactome" id="R-HSA-156711">
    <property type="pathway name" value="Polo-like kinase mediated events"/>
</dbReference>
<dbReference type="Reactome" id="R-HSA-8869496">
    <property type="pathway name" value="TFAP2A acts as a transcriptional repressor during retinoic acid induced cell differentiation"/>
</dbReference>
<dbReference type="SignaLink" id="P10244"/>
<dbReference type="SIGNOR" id="P10244"/>
<dbReference type="BioGRID-ORCS" id="4605">
    <property type="hits" value="421 hits in 1204 CRISPR screens"/>
</dbReference>
<dbReference type="ChiTaRS" id="MYBL2">
    <property type="organism name" value="human"/>
</dbReference>
<dbReference type="GeneWiki" id="MYBL2"/>
<dbReference type="GenomeRNAi" id="4605"/>
<dbReference type="Pharos" id="P10244">
    <property type="development level" value="Tbio"/>
</dbReference>
<dbReference type="PRO" id="PR:P10244"/>
<dbReference type="Proteomes" id="UP000005640">
    <property type="component" value="Chromosome 20"/>
</dbReference>
<dbReference type="RNAct" id="P10244">
    <property type="molecule type" value="protein"/>
</dbReference>
<dbReference type="Bgee" id="ENSG00000101057">
    <property type="expression patterns" value="Expressed in primordial germ cell in gonad and 136 other cell types or tissues"/>
</dbReference>
<dbReference type="GO" id="GO:0005829">
    <property type="term" value="C:cytosol"/>
    <property type="evidence" value="ECO:0000314"/>
    <property type="project" value="HPA"/>
</dbReference>
<dbReference type="GO" id="GO:0031523">
    <property type="term" value="C:Myb complex"/>
    <property type="evidence" value="ECO:0007669"/>
    <property type="project" value="Ensembl"/>
</dbReference>
<dbReference type="GO" id="GO:0005654">
    <property type="term" value="C:nucleoplasm"/>
    <property type="evidence" value="ECO:0000314"/>
    <property type="project" value="HPA"/>
</dbReference>
<dbReference type="GO" id="GO:0005634">
    <property type="term" value="C:nucleus"/>
    <property type="evidence" value="ECO:0000318"/>
    <property type="project" value="GO_Central"/>
</dbReference>
<dbReference type="GO" id="GO:0001228">
    <property type="term" value="F:DNA-binding transcription activator activity, RNA polymerase II-specific"/>
    <property type="evidence" value="ECO:0000314"/>
    <property type="project" value="NTNU_SB"/>
</dbReference>
<dbReference type="GO" id="GO:0000981">
    <property type="term" value="F:DNA-binding transcription factor activity, RNA polymerase II-specific"/>
    <property type="evidence" value="ECO:0000318"/>
    <property type="project" value="GO_Central"/>
</dbReference>
<dbReference type="GO" id="GO:0000978">
    <property type="term" value="F:RNA polymerase II cis-regulatory region sequence-specific DNA binding"/>
    <property type="evidence" value="ECO:0000314"/>
    <property type="project" value="NTNU_SB"/>
</dbReference>
<dbReference type="GO" id="GO:1990837">
    <property type="term" value="F:sequence-specific double-stranded DNA binding"/>
    <property type="evidence" value="ECO:0000314"/>
    <property type="project" value="ARUK-UCL"/>
</dbReference>
<dbReference type="GO" id="GO:1990830">
    <property type="term" value="P:cellular response to leukemia inhibitory factor"/>
    <property type="evidence" value="ECO:0007669"/>
    <property type="project" value="Ensembl"/>
</dbReference>
<dbReference type="GO" id="GO:0000278">
    <property type="term" value="P:mitotic cell cycle"/>
    <property type="evidence" value="ECO:0000318"/>
    <property type="project" value="GO_Central"/>
</dbReference>
<dbReference type="GO" id="GO:0090307">
    <property type="term" value="P:mitotic spindle assembly"/>
    <property type="evidence" value="ECO:0007669"/>
    <property type="project" value="Ensembl"/>
</dbReference>
<dbReference type="GO" id="GO:0045944">
    <property type="term" value="P:positive regulation of transcription by RNA polymerase II"/>
    <property type="evidence" value="ECO:0000314"/>
    <property type="project" value="NTNU_SB"/>
</dbReference>
<dbReference type="CDD" id="cd00167">
    <property type="entry name" value="SANT"/>
    <property type="match status" value="3"/>
</dbReference>
<dbReference type="FunFam" id="1.10.10.60:FF:000201">
    <property type="entry name" value="MYB proto-oncogene like 2"/>
    <property type="match status" value="1"/>
</dbReference>
<dbReference type="FunFam" id="1.10.10.60:FF:000216">
    <property type="entry name" value="MYB proto-oncogene like 2"/>
    <property type="match status" value="1"/>
</dbReference>
<dbReference type="FunFam" id="1.10.10.60:FF:000010">
    <property type="entry name" value="Transcriptional activator Myb isoform A"/>
    <property type="match status" value="1"/>
</dbReference>
<dbReference type="Gene3D" id="1.10.10.60">
    <property type="entry name" value="Homeodomain-like"/>
    <property type="match status" value="3"/>
</dbReference>
<dbReference type="InterPro" id="IPR015395">
    <property type="entry name" value="C-myb_C"/>
</dbReference>
<dbReference type="InterPro" id="IPR009057">
    <property type="entry name" value="Homeodomain-like_sf"/>
</dbReference>
<dbReference type="InterPro" id="IPR017930">
    <property type="entry name" value="Myb_dom"/>
</dbReference>
<dbReference type="InterPro" id="IPR050560">
    <property type="entry name" value="MYB_TF"/>
</dbReference>
<dbReference type="InterPro" id="IPR001005">
    <property type="entry name" value="SANT/Myb"/>
</dbReference>
<dbReference type="PANTHER" id="PTHR45614">
    <property type="entry name" value="MYB PROTEIN-RELATED"/>
    <property type="match status" value="1"/>
</dbReference>
<dbReference type="PANTHER" id="PTHR45614:SF51">
    <property type="entry name" value="MYB-LIKE DNA-BINDING PROTEIN BAS1"/>
    <property type="match status" value="1"/>
</dbReference>
<dbReference type="Pfam" id="PF09316">
    <property type="entry name" value="Cmyb_C"/>
    <property type="match status" value="1"/>
</dbReference>
<dbReference type="Pfam" id="PF13921">
    <property type="entry name" value="Myb_DNA-bind_6"/>
    <property type="match status" value="1"/>
</dbReference>
<dbReference type="Pfam" id="PF00249">
    <property type="entry name" value="Myb_DNA-binding"/>
    <property type="match status" value="1"/>
</dbReference>
<dbReference type="SMART" id="SM00717">
    <property type="entry name" value="SANT"/>
    <property type="match status" value="3"/>
</dbReference>
<dbReference type="SUPFAM" id="SSF46689">
    <property type="entry name" value="Homeodomain-like"/>
    <property type="match status" value="2"/>
</dbReference>
<dbReference type="PROSITE" id="PS51294">
    <property type="entry name" value="HTH_MYB"/>
    <property type="match status" value="3"/>
</dbReference>
<sequence length="700" mass="78764">MSRRTRCEDLDELHYQDTDSDVPEQRDSKCKVKWTHEEDEQLRALVRQFGQQDWKFLASHFPNRTDQQCQYRWLRVLNPDLVKGPWTKEEDQKVIELVKKYGTKQWTLIAKHLKGRLGKQCRERWHNHLNPEVKKSCWTEEEDRIICEAHKVLGNRWAEIAKMLPGRTDNAVKNHWNSTIKRKVDTGGFLSESKDCKPPVYLLLELEDKDGLQSAQPTEGQGSLLTNWPSVPPTIKEEENSEEELAAATTSKEQEPIGTDLDAVRTPEPLEEFPKREDQEGSPPETSLPYKWVVEAANLLIPAVGSSLSEALDLIESDPDAWCDLSKFDLPEEPSAEDSINNSLVQLQASHQQQVLPPRQPSALVPSVTEYRLDGHTISDLSRSSRGELIPISPSTEVGGSGIGTPPSVLKRQRKRRVALSPVTENSTSLSFLDSCNSLTPKSTPVKTLPFSPSQFLNFWNKQDTLELESPSLTSTPVCSQKVVVTTPLHRDKTPLHQKHAAFVTPDQKYSMDNTPHTPTPFKNALEKYGPLKPLPQTPHLEEDLKEVLRSEAGIELIIEDDIRPEKQKRKPGLRRSPIKKVRKSLALDIVDEDVKLMMSTLPKSLSLPTTAPSNSSSLTLSGIKEDNSLLNQGFLQAKPEKAAVAQKPRSHFTTPAPMSSAWKTVACGGTRDQLFMQEKARQLLGRLKPSHTSRTLILS</sequence>
<feature type="chain" id="PRO_0000197058" description="Myb-related protein B">
    <location>
        <begin position="1"/>
        <end position="700"/>
    </location>
</feature>
<feature type="domain" description="HTH myb-type 1" evidence="1">
    <location>
        <begin position="26"/>
        <end position="77"/>
    </location>
</feature>
<feature type="domain" description="HTH myb-type 2" evidence="1">
    <location>
        <begin position="78"/>
        <end position="133"/>
    </location>
</feature>
<feature type="domain" description="HTH myb-type 3" evidence="1">
    <location>
        <begin position="134"/>
        <end position="184"/>
    </location>
</feature>
<feature type="DNA-binding region" description="H-T-H motif" evidence="1">
    <location>
        <begin position="54"/>
        <end position="77"/>
    </location>
</feature>
<feature type="DNA-binding region" description="H-T-H motif" evidence="1">
    <location>
        <begin position="106"/>
        <end position="129"/>
    </location>
</feature>
<feature type="DNA-binding region" description="H-T-H motif" evidence="1">
    <location>
        <begin position="157"/>
        <end position="180"/>
    </location>
</feature>
<feature type="region of interest" description="Disordered" evidence="2">
    <location>
        <begin position="212"/>
        <end position="287"/>
    </location>
</feature>
<feature type="region of interest" description="Disordered" evidence="2">
    <location>
        <begin position="391"/>
        <end position="412"/>
    </location>
</feature>
<feature type="short sequence motif" description="Nuclear localization signal" evidence="9">
    <location>
        <begin position="411"/>
        <end position="417"/>
    </location>
</feature>
<feature type="short sequence motif" description="Bipartite nuclear localization signal">
    <location>
        <begin position="564"/>
        <end position="584"/>
    </location>
</feature>
<feature type="compositionally biased region" description="Polar residues" evidence="2">
    <location>
        <begin position="213"/>
        <end position="229"/>
    </location>
</feature>
<feature type="modified residue" description="Phosphoserine" evidence="14 15 16 17">
    <location>
        <position position="241"/>
    </location>
</feature>
<feature type="modified residue" description="Phosphothreonine" evidence="13">
    <location>
        <position position="266"/>
    </location>
</feature>
<feature type="modified residue" description="Phosphoserine" evidence="17">
    <location>
        <position position="282"/>
    </location>
</feature>
<feature type="modified residue" description="Phosphoserine" evidence="17">
    <location>
        <position position="393"/>
    </location>
</feature>
<feature type="modified residue" description="Phosphothreonine; by CDK2" evidence="3">
    <location>
        <position position="440"/>
    </location>
</feature>
<feature type="modified residue" description="Phosphothreonine; by CDK2" evidence="3 10">
    <location>
        <position position="444"/>
    </location>
</feature>
<feature type="modified residue" description="Phosphothreonine; by CDK2" evidence="10">
    <location>
        <position position="487"/>
    </location>
</feature>
<feature type="modified residue" description="Phosphothreonine; by CDK2" evidence="3 10">
    <location>
        <position position="494"/>
    </location>
</feature>
<feature type="modified residue" description="Phosphothreonine" evidence="17">
    <location>
        <position position="505"/>
    </location>
</feature>
<feature type="modified residue" description="Phosphothreonine; by CDK2" evidence="3">
    <location>
        <position position="520"/>
    </location>
</feature>
<feature type="modified residue" description="Phosphoserine; by CDK2" evidence="3 10">
    <location>
        <position position="577"/>
    </location>
</feature>
<feature type="cross-link" description="Glycyl lysine isopeptide (Lys-Gly) (interchain with G-Cter in SUMO2)" evidence="20">
    <location>
        <position position="104"/>
    </location>
</feature>
<feature type="cross-link" description="Glycyl lysine isopeptide (Lys-Gly) (interchain with G-Cter in SUMO2)" evidence="20">
    <location>
        <position position="194"/>
    </location>
</feature>
<feature type="cross-link" description="Glycyl lysine isopeptide (Lys-Gly) (interchain with G-Cter in SUMO2)" evidence="18 19 20">
    <location>
        <position position="197"/>
    </location>
</feature>
<feature type="cross-link" description="Glycyl lysine isopeptide (Lys-Gly) (interchain with G-Cter in SUMO2)" evidence="20">
    <location>
        <position position="275"/>
    </location>
</feature>
<feature type="cross-link" description="Glycyl lysine isopeptide (Lys-Gly) (interchain with G-Cter in SUMO2)" evidence="20">
    <location>
        <position position="411"/>
    </location>
</feature>
<feature type="cross-link" description="Glycyl lysine isopeptide (Lys-Gly) (interchain with G-Cter in SUMO2)" evidence="20">
    <location>
        <position position="447"/>
    </location>
</feature>
<feature type="cross-link" description="Glycyl lysine isopeptide (Lys-Gly) (interchain with G-Cter in SUMO2)" evidence="20">
    <location>
        <position position="482"/>
    </location>
</feature>
<feature type="cross-link" description="Glycyl lysine isopeptide (Lys-Gly) (interchain with G-Cter in SUMO2)" evidence="20">
    <location>
        <position position="499"/>
    </location>
</feature>
<feature type="cross-link" description="Glycyl lysine isopeptide (Lys-Gly) (interchain with G-Cter in SUMO2)" evidence="18 19 20">
    <location>
        <position position="509"/>
    </location>
</feature>
<feature type="cross-link" description="Glycyl lysine isopeptide (Lys-Gly) (interchain with G-Cter in SUMO2)" evidence="20">
    <location>
        <position position="523"/>
    </location>
</feature>
<feature type="cross-link" description="Glycyl lysine isopeptide (Lys-Gly) (interchain with G-Cter in SUMO2)" evidence="20">
    <location>
        <position position="533"/>
    </location>
</feature>
<feature type="cross-link" description="Glycyl lysine isopeptide (Lys-Gly) (interchain with G-Cter in SUMO2)" evidence="18 20">
    <location>
        <position position="546"/>
    </location>
</feature>
<feature type="cross-link" description="Glycyl lysine isopeptide (Lys-Gly) (interchain with G-Cter in SUMO2)" evidence="20">
    <location>
        <position position="584"/>
    </location>
</feature>
<feature type="cross-link" description="Glycyl lysine isopeptide (Lys-Gly) (interchain with G-Cter in SUMO2)" evidence="19 20">
    <location>
        <position position="596"/>
    </location>
</feature>
<feature type="cross-link" description="Glycyl lysine isopeptide (Lys-Gly) (interchain with G-Cter in SUMO2)" evidence="20">
    <location>
        <position position="625"/>
    </location>
</feature>
<feature type="cross-link" description="Glycyl lysine isopeptide (Lys-Gly) (interchain with G-Cter in SUMO2)" evidence="18 19 20">
    <location>
        <position position="639"/>
    </location>
</feature>
<feature type="cross-link" description="Glycyl lysine isopeptide (Lys-Gly) (interchain with G-Cter in SUMO2)" evidence="20">
    <location>
        <position position="648"/>
    </location>
</feature>
<feature type="splice variant" id="VSP_053987" description="In isoform 2." evidence="11">
    <location>
        <begin position="39"/>
        <end position="62"/>
    </location>
</feature>
<feature type="sequence variant" id="VAR_050190" description="In dbSNP:rs6017146.">
    <original>N</original>
    <variation>S</variation>
    <location>
        <position position="341"/>
    </location>
</feature>
<feature type="sequence variant" id="VAR_020422" description="In dbSNP:rs2070235." evidence="5">
    <original>S</original>
    <variation>G</variation>
    <location>
        <position position="427"/>
    </location>
</feature>
<feature type="sequence variant" id="VAR_050191" description="In dbSNP:rs7660.">
    <original>V</original>
    <variation>M</variation>
    <location>
        <position position="595"/>
    </location>
</feature>
<feature type="sequence variant" id="VAR_050192" description="In dbSNP:rs11556379.">
    <original>I</original>
    <variation>M</variation>
    <location>
        <position position="624"/>
    </location>
</feature>
<feature type="sequence conflict" description="In Ref. 3; BAD97202." evidence="12" ref="3">
    <original>V</original>
    <variation>A</variation>
    <location>
        <position position="184"/>
    </location>
</feature>
<feature type="helix" evidence="21">
    <location>
        <begin position="663"/>
        <end position="667"/>
    </location>
</feature>
<feature type="helix" evidence="21">
    <location>
        <begin position="672"/>
        <end position="685"/>
    </location>
</feature>
<proteinExistence type="evidence at protein level"/>
<evidence type="ECO:0000255" key="1">
    <source>
        <dbReference type="PROSITE-ProRule" id="PRU00625"/>
    </source>
</evidence>
<evidence type="ECO:0000256" key="2">
    <source>
        <dbReference type="SAM" id="MobiDB-lite"/>
    </source>
</evidence>
<evidence type="ECO:0000269" key="3">
    <source>
    </source>
</evidence>
<evidence type="ECO:0000269" key="4">
    <source>
    </source>
</evidence>
<evidence type="ECO:0000269" key="5">
    <source>
    </source>
</evidence>
<evidence type="ECO:0000269" key="6">
    <source>
    </source>
</evidence>
<evidence type="ECO:0000269" key="7">
    <source>
    </source>
</evidence>
<evidence type="ECO:0000269" key="8">
    <source>
    </source>
</evidence>
<evidence type="ECO:0000269" key="9">
    <source>
    </source>
</evidence>
<evidence type="ECO:0000269" key="10">
    <source>
    </source>
</evidence>
<evidence type="ECO:0000303" key="11">
    <source>
    </source>
</evidence>
<evidence type="ECO:0000305" key="12"/>
<evidence type="ECO:0007744" key="13">
    <source>
    </source>
</evidence>
<evidence type="ECO:0007744" key="14">
    <source>
    </source>
</evidence>
<evidence type="ECO:0007744" key="15">
    <source>
    </source>
</evidence>
<evidence type="ECO:0007744" key="16">
    <source>
    </source>
</evidence>
<evidence type="ECO:0007744" key="17">
    <source>
    </source>
</evidence>
<evidence type="ECO:0007744" key="18">
    <source>
    </source>
</evidence>
<evidence type="ECO:0007744" key="19">
    <source>
    </source>
</evidence>
<evidence type="ECO:0007744" key="20">
    <source>
    </source>
</evidence>
<evidence type="ECO:0007829" key="21">
    <source>
        <dbReference type="PDB" id="6C48"/>
    </source>
</evidence>
<accession>P10244</accession>
<accession>B2RBS5</accession>
<accession>B7Z8D9</accession>
<accession>F8W6N6</accession>
<accession>Q53F07</accession>
<keyword id="KW-0002">3D-structure</keyword>
<keyword id="KW-0025">Alternative splicing</keyword>
<keyword id="KW-0238">DNA-binding</keyword>
<keyword id="KW-1017">Isopeptide bond</keyword>
<keyword id="KW-0539">Nucleus</keyword>
<keyword id="KW-0597">Phosphoprotein</keyword>
<keyword id="KW-1267">Proteomics identification</keyword>
<keyword id="KW-1185">Reference proteome</keyword>
<keyword id="KW-0677">Repeat</keyword>
<keyword id="KW-0804">Transcription</keyword>
<keyword id="KW-0805">Transcription regulation</keyword>
<keyword id="KW-0832">Ubl conjugation</keyword>
<gene>
    <name type="primary">MYBL2</name>
    <name type="synonym">BMYB</name>
</gene>
<name>MYBB_HUMAN</name>
<organism>
    <name type="scientific">Homo sapiens</name>
    <name type="common">Human</name>
    <dbReference type="NCBI Taxonomy" id="9606"/>
    <lineage>
        <taxon>Eukaryota</taxon>
        <taxon>Metazoa</taxon>
        <taxon>Chordata</taxon>
        <taxon>Craniata</taxon>
        <taxon>Vertebrata</taxon>
        <taxon>Euteleostomi</taxon>
        <taxon>Mammalia</taxon>
        <taxon>Eutheria</taxon>
        <taxon>Euarchontoglires</taxon>
        <taxon>Primates</taxon>
        <taxon>Haplorrhini</taxon>
        <taxon>Catarrhini</taxon>
        <taxon>Hominidae</taxon>
        <taxon>Homo</taxon>
    </lineage>
</organism>
<comment type="function">
    <text evidence="4">Transcription factor involved in the regulation of cell survival, proliferation, and differentiation. Transactivates the expression of the CLU gene.</text>
</comment>
<comment type="subunit">
    <text evidence="6 7 8">Component of the DREAM complex (also named LINC complex) at least composed of E2F4, E2F5, LIN9, LIN37, LIN52, LIN54, MYBL1, MYBL2, RBL1, RBL2, RBBP4, TFDP1 and TFDP2. The complex exists in quiescent cells where it represses cell cycle-dependent genes. It dissociates in S phase when LIN9, LIN37, LIN52 and LIN54 form a subcomplex that binds to MYBL22. Interacts with CCNF (via the Cyclin N-terminal domain) (PubMed:25557911).</text>
</comment>
<comment type="interaction">
    <interactant intactId="EBI-1389468">
        <id>P10244</id>
    </interactant>
    <interactant intactId="EBI-1389411">
        <id>Q6MZP7</id>
        <label>LIN54</label>
    </interactant>
    <organismsDiffer>false</organismsDiffer>
    <experiments>4</experiments>
</comment>
<comment type="interaction">
    <interactant intactId="EBI-1389468">
        <id>P10244</id>
    </interactant>
    <interactant intactId="EBI-1389424">
        <id>Q5TKA1</id>
        <label>LIN9</label>
    </interactant>
    <organismsDiffer>false</organismsDiffer>
    <experiments>9</experiments>
</comment>
<comment type="subcellular location">
    <subcellularLocation>
        <location>Nucleus</location>
    </subcellularLocation>
</comment>
<comment type="alternative products">
    <event type="alternative splicing"/>
    <isoform>
        <id>P10244-1</id>
        <name>1</name>
        <sequence type="displayed"/>
    </isoform>
    <isoform>
        <id>P10244-2</id>
        <name>2</name>
        <sequence type="described" ref="VSP_053987"/>
    </isoform>
</comment>
<comment type="PTM">
    <text evidence="3 10">Phosphorylated by cyclin A/CDK2 during S-phase. Phosphorylation at Thr-520 is probably involved in transcriptional activity.</text>
</comment>
<comment type="online information" name="Atlas of Genetics and Cytogenetics in Oncology and Haematology">
    <link uri="https://atlasgeneticsoncology.org/gene/41469/MYBL2"/>
</comment>
<reference key="1">
    <citation type="journal article" date="1988" name="Nucleic Acids Res.">
        <title>Isolation of human cDNA clones of myb-related genes, A-myb and B-myb.</title>
        <authorList>
            <person name="Nomura N."/>
            <person name="Takahashi M."/>
            <person name="Matsui M."/>
            <person name="Ishii S."/>
            <person name="Date T."/>
            <person name="Sasamoto S."/>
            <person name="Ishizaki R."/>
        </authorList>
    </citation>
    <scope>NUCLEOTIDE SEQUENCE [MRNA] (ISOFORM 1)</scope>
</reference>
<reference key="2">
    <citation type="journal article" date="2004" name="Nat. Genet.">
        <title>Complete sequencing and characterization of 21,243 full-length human cDNAs.</title>
        <authorList>
            <person name="Ota T."/>
            <person name="Suzuki Y."/>
            <person name="Nishikawa T."/>
            <person name="Otsuki T."/>
            <person name="Sugiyama T."/>
            <person name="Irie R."/>
            <person name="Wakamatsu A."/>
            <person name="Hayashi K."/>
            <person name="Sato H."/>
            <person name="Nagai K."/>
            <person name="Kimura K."/>
            <person name="Makita H."/>
            <person name="Sekine M."/>
            <person name="Obayashi M."/>
            <person name="Nishi T."/>
            <person name="Shibahara T."/>
            <person name="Tanaka T."/>
            <person name="Ishii S."/>
            <person name="Yamamoto J."/>
            <person name="Saito K."/>
            <person name="Kawai Y."/>
            <person name="Isono Y."/>
            <person name="Nakamura Y."/>
            <person name="Nagahari K."/>
            <person name="Murakami K."/>
            <person name="Yasuda T."/>
            <person name="Iwayanagi T."/>
            <person name="Wagatsuma M."/>
            <person name="Shiratori A."/>
            <person name="Sudo H."/>
            <person name="Hosoiri T."/>
            <person name="Kaku Y."/>
            <person name="Kodaira H."/>
            <person name="Kondo H."/>
            <person name="Sugawara M."/>
            <person name="Takahashi M."/>
            <person name="Kanda K."/>
            <person name="Yokoi T."/>
            <person name="Furuya T."/>
            <person name="Kikkawa E."/>
            <person name="Omura Y."/>
            <person name="Abe K."/>
            <person name="Kamihara K."/>
            <person name="Katsuta N."/>
            <person name="Sato K."/>
            <person name="Tanikawa M."/>
            <person name="Yamazaki M."/>
            <person name="Ninomiya K."/>
            <person name="Ishibashi T."/>
            <person name="Yamashita H."/>
            <person name="Murakawa K."/>
            <person name="Fujimori K."/>
            <person name="Tanai H."/>
            <person name="Kimata M."/>
            <person name="Watanabe M."/>
            <person name="Hiraoka S."/>
            <person name="Chiba Y."/>
            <person name="Ishida S."/>
            <person name="Ono Y."/>
            <person name="Takiguchi S."/>
            <person name="Watanabe S."/>
            <person name="Yosida M."/>
            <person name="Hotuta T."/>
            <person name="Kusano J."/>
            <person name="Kanehori K."/>
            <person name="Takahashi-Fujii A."/>
            <person name="Hara H."/>
            <person name="Tanase T.-O."/>
            <person name="Nomura Y."/>
            <person name="Togiya S."/>
            <person name="Komai F."/>
            <person name="Hara R."/>
            <person name="Takeuchi K."/>
            <person name="Arita M."/>
            <person name="Imose N."/>
            <person name="Musashino K."/>
            <person name="Yuuki H."/>
            <person name="Oshima A."/>
            <person name="Sasaki N."/>
            <person name="Aotsuka S."/>
            <person name="Yoshikawa Y."/>
            <person name="Matsunawa H."/>
            <person name="Ichihara T."/>
            <person name="Shiohata N."/>
            <person name="Sano S."/>
            <person name="Moriya S."/>
            <person name="Momiyama H."/>
            <person name="Satoh N."/>
            <person name="Takami S."/>
            <person name="Terashima Y."/>
            <person name="Suzuki O."/>
            <person name="Nakagawa S."/>
            <person name="Senoh A."/>
            <person name="Mizoguchi H."/>
            <person name="Goto Y."/>
            <person name="Shimizu F."/>
            <person name="Wakebe H."/>
            <person name="Hishigaki H."/>
            <person name="Watanabe T."/>
            <person name="Sugiyama A."/>
            <person name="Takemoto M."/>
            <person name="Kawakami B."/>
            <person name="Yamazaki M."/>
            <person name="Watanabe K."/>
            <person name="Kumagai A."/>
            <person name="Itakura S."/>
            <person name="Fukuzumi Y."/>
            <person name="Fujimori Y."/>
            <person name="Komiyama M."/>
            <person name="Tashiro H."/>
            <person name="Tanigami A."/>
            <person name="Fujiwara T."/>
            <person name="Ono T."/>
            <person name="Yamada K."/>
            <person name="Fujii Y."/>
            <person name="Ozaki K."/>
            <person name="Hirao M."/>
            <person name="Ohmori Y."/>
            <person name="Kawabata A."/>
            <person name="Hikiji T."/>
            <person name="Kobatake N."/>
            <person name="Inagaki H."/>
            <person name="Ikema Y."/>
            <person name="Okamoto S."/>
            <person name="Okitani R."/>
            <person name="Kawakami T."/>
            <person name="Noguchi S."/>
            <person name="Itoh T."/>
            <person name="Shigeta K."/>
            <person name="Senba T."/>
            <person name="Matsumura K."/>
            <person name="Nakajima Y."/>
            <person name="Mizuno T."/>
            <person name="Morinaga M."/>
            <person name="Sasaki M."/>
            <person name="Togashi T."/>
            <person name="Oyama M."/>
            <person name="Hata H."/>
            <person name="Watanabe M."/>
            <person name="Komatsu T."/>
            <person name="Mizushima-Sugano J."/>
            <person name="Satoh T."/>
            <person name="Shirai Y."/>
            <person name="Takahashi Y."/>
            <person name="Nakagawa K."/>
            <person name="Okumura K."/>
            <person name="Nagase T."/>
            <person name="Nomura N."/>
            <person name="Kikuchi H."/>
            <person name="Masuho Y."/>
            <person name="Yamashita R."/>
            <person name="Nakai K."/>
            <person name="Yada T."/>
            <person name="Nakamura Y."/>
            <person name="Ohara O."/>
            <person name="Isogai T."/>
            <person name="Sugano S."/>
        </authorList>
    </citation>
    <scope>NUCLEOTIDE SEQUENCE [LARGE SCALE MRNA] (ISOFORMS 1 AND 2)</scope>
    <scope>VARIANT GLY-427</scope>
    <source>
        <tissue>Brain</tissue>
        <tissue>Thymus</tissue>
    </source>
</reference>
<reference key="3">
    <citation type="submission" date="2005-04" db="EMBL/GenBank/DDBJ databases">
        <authorList>
            <person name="Totoki Y."/>
            <person name="Toyoda A."/>
            <person name="Takeda T."/>
            <person name="Sakaki Y."/>
            <person name="Tanaka A."/>
            <person name="Yokoyama S."/>
        </authorList>
    </citation>
    <scope>NUCLEOTIDE SEQUENCE [LARGE SCALE MRNA] (ISOFORM 1)</scope>
</reference>
<reference key="4">
    <citation type="journal article" date="2001" name="Nature">
        <title>The DNA sequence and comparative analysis of human chromosome 20.</title>
        <authorList>
            <person name="Deloukas P."/>
            <person name="Matthews L.H."/>
            <person name="Ashurst J.L."/>
            <person name="Burton J."/>
            <person name="Gilbert J.G.R."/>
            <person name="Jones M."/>
            <person name="Stavrides G."/>
            <person name="Almeida J.P."/>
            <person name="Babbage A.K."/>
            <person name="Bagguley C.L."/>
            <person name="Bailey J."/>
            <person name="Barlow K.F."/>
            <person name="Bates K.N."/>
            <person name="Beard L.M."/>
            <person name="Beare D.M."/>
            <person name="Beasley O.P."/>
            <person name="Bird C.P."/>
            <person name="Blakey S.E."/>
            <person name="Bridgeman A.M."/>
            <person name="Brown A.J."/>
            <person name="Buck D."/>
            <person name="Burrill W.D."/>
            <person name="Butler A.P."/>
            <person name="Carder C."/>
            <person name="Carter N.P."/>
            <person name="Chapman J.C."/>
            <person name="Clamp M."/>
            <person name="Clark G."/>
            <person name="Clark L.N."/>
            <person name="Clark S.Y."/>
            <person name="Clee C.M."/>
            <person name="Clegg S."/>
            <person name="Cobley V.E."/>
            <person name="Collier R.E."/>
            <person name="Connor R.E."/>
            <person name="Corby N.R."/>
            <person name="Coulson A."/>
            <person name="Coville G.J."/>
            <person name="Deadman R."/>
            <person name="Dhami P.D."/>
            <person name="Dunn M."/>
            <person name="Ellington A.G."/>
            <person name="Frankland J.A."/>
            <person name="Fraser A."/>
            <person name="French L."/>
            <person name="Garner P."/>
            <person name="Grafham D.V."/>
            <person name="Griffiths C."/>
            <person name="Griffiths M.N.D."/>
            <person name="Gwilliam R."/>
            <person name="Hall R.E."/>
            <person name="Hammond S."/>
            <person name="Harley J.L."/>
            <person name="Heath P.D."/>
            <person name="Ho S."/>
            <person name="Holden J.L."/>
            <person name="Howden P.J."/>
            <person name="Huckle E."/>
            <person name="Hunt A.R."/>
            <person name="Hunt S.E."/>
            <person name="Jekosch K."/>
            <person name="Johnson C.M."/>
            <person name="Johnson D."/>
            <person name="Kay M.P."/>
            <person name="Kimberley A.M."/>
            <person name="King A."/>
            <person name="Knights A."/>
            <person name="Laird G.K."/>
            <person name="Lawlor S."/>
            <person name="Lehvaeslaiho M.H."/>
            <person name="Leversha M.A."/>
            <person name="Lloyd C."/>
            <person name="Lloyd D.M."/>
            <person name="Lovell J.D."/>
            <person name="Marsh V.L."/>
            <person name="Martin S.L."/>
            <person name="McConnachie L.J."/>
            <person name="McLay K."/>
            <person name="McMurray A.A."/>
            <person name="Milne S.A."/>
            <person name="Mistry D."/>
            <person name="Moore M.J.F."/>
            <person name="Mullikin J.C."/>
            <person name="Nickerson T."/>
            <person name="Oliver K."/>
            <person name="Parker A."/>
            <person name="Patel R."/>
            <person name="Pearce T.A.V."/>
            <person name="Peck A.I."/>
            <person name="Phillimore B.J.C.T."/>
            <person name="Prathalingam S.R."/>
            <person name="Plumb R.W."/>
            <person name="Ramsay H."/>
            <person name="Rice C.M."/>
            <person name="Ross M.T."/>
            <person name="Scott C.E."/>
            <person name="Sehra H.K."/>
            <person name="Shownkeen R."/>
            <person name="Sims S."/>
            <person name="Skuce C.D."/>
            <person name="Smith M.L."/>
            <person name="Soderlund C."/>
            <person name="Steward C.A."/>
            <person name="Sulston J.E."/>
            <person name="Swann R.M."/>
            <person name="Sycamore N."/>
            <person name="Taylor R."/>
            <person name="Tee L."/>
            <person name="Thomas D.W."/>
            <person name="Thorpe A."/>
            <person name="Tracey A."/>
            <person name="Tromans A.C."/>
            <person name="Vaudin M."/>
            <person name="Wall M."/>
            <person name="Wallis J.M."/>
            <person name="Whitehead S.L."/>
            <person name="Whittaker P."/>
            <person name="Willey D.L."/>
            <person name="Williams L."/>
            <person name="Williams S.A."/>
            <person name="Wilming L."/>
            <person name="Wray P.W."/>
            <person name="Hubbard T."/>
            <person name="Durbin R.M."/>
            <person name="Bentley D.R."/>
            <person name="Beck S."/>
            <person name="Rogers J."/>
        </authorList>
    </citation>
    <scope>NUCLEOTIDE SEQUENCE [LARGE SCALE GENOMIC DNA]</scope>
</reference>
<reference key="5">
    <citation type="submission" date="2005-09" db="EMBL/GenBank/DDBJ databases">
        <authorList>
            <person name="Mural R.J."/>
            <person name="Istrail S."/>
            <person name="Sutton G.G."/>
            <person name="Florea L."/>
            <person name="Halpern A.L."/>
            <person name="Mobarry C.M."/>
            <person name="Lippert R."/>
            <person name="Walenz B."/>
            <person name="Shatkay H."/>
            <person name="Dew I."/>
            <person name="Miller J.R."/>
            <person name="Flanigan M.J."/>
            <person name="Edwards N.J."/>
            <person name="Bolanos R."/>
            <person name="Fasulo D."/>
            <person name="Halldorsson B.V."/>
            <person name="Hannenhalli S."/>
            <person name="Turner R."/>
            <person name="Yooseph S."/>
            <person name="Lu F."/>
            <person name="Nusskern D.R."/>
            <person name="Shue B.C."/>
            <person name="Zheng X.H."/>
            <person name="Zhong F."/>
            <person name="Delcher A.L."/>
            <person name="Huson D.H."/>
            <person name="Kravitz S.A."/>
            <person name="Mouchard L."/>
            <person name="Reinert K."/>
            <person name="Remington K.A."/>
            <person name="Clark A.G."/>
            <person name="Waterman M.S."/>
            <person name="Eichler E.E."/>
            <person name="Adams M.D."/>
            <person name="Hunkapiller M.W."/>
            <person name="Myers E.W."/>
            <person name="Venter J.C."/>
        </authorList>
    </citation>
    <scope>NUCLEOTIDE SEQUENCE [LARGE SCALE GENOMIC DNA]</scope>
</reference>
<reference key="6">
    <citation type="journal article" date="2004" name="Genome Res.">
        <title>The status, quality, and expansion of the NIH full-length cDNA project: the Mammalian Gene Collection (MGC).</title>
        <authorList>
            <consortium name="The MGC Project Team"/>
        </authorList>
    </citation>
    <scope>NUCLEOTIDE SEQUENCE [LARGE SCALE MRNA] (ISOFORM 1)</scope>
    <source>
        <tissue>Brain</tissue>
        <tissue>Eye</tissue>
    </source>
</reference>
<reference key="7">
    <citation type="journal article" date="1998" name="Oncogene">
        <title>The cell-cycle regulated transcription factor B-Myb is phosphorylated by cyclin A/Cdk2 at sites that enhance its transactivation properties.</title>
        <authorList>
            <person name="Saville M.K."/>
            <person name="Watson R.J."/>
        </authorList>
    </citation>
    <scope>PHOSPHORYLATION AT THR-444; THR-487; THR-494 AND SER-577</scope>
</reference>
<reference key="8">
    <citation type="journal article" date="1999" name="Eur. J. Biochem.">
        <title>Identification of cyclin A/Cdk2 phosphorylation sites in B-Myb.</title>
        <authorList>
            <person name="Bartsch O."/>
            <person name="Horstmann S."/>
            <person name="Toprak K."/>
            <person name="Klempnauer K.H."/>
            <person name="Ferrari S."/>
        </authorList>
    </citation>
    <scope>PHOSPHORYLATION AT THR-440; THR-444; THR-494; THR-520 AND SER-577</scope>
</reference>
<reference key="9">
    <citation type="journal article" date="2000" name="J. Biol. Chem.">
        <title>Direct transactivation of the anti-apoptotic gene apolipoprotein J (clusterin) by B-MYB.</title>
        <authorList>
            <person name="Cervellera M."/>
            <person name="Raschella G."/>
            <person name="Santilli G."/>
            <person name="Tanno B."/>
            <person name="Ventura A."/>
            <person name="Mancini C."/>
            <person name="Sevignani C."/>
            <person name="Calabretta B."/>
            <person name="Sala A."/>
        </authorList>
    </citation>
    <scope>FUNCTION</scope>
</reference>
<reference key="10">
    <citation type="journal article" date="1994" name="FEBS Lett.">
        <title>Multiple nuclear localization signals of the B-myb gene product.</title>
        <authorList>
            <person name="Takemoto Y."/>
            <person name="Tashiro S."/>
            <person name="Handa H."/>
            <person name="Ishii S."/>
        </authorList>
    </citation>
    <scope>NUCLEAR LOCALIZATION SIGNALS</scope>
</reference>
<reference key="11">
    <citation type="journal article" date="2006" name="Cell">
        <title>Global, in vivo, and site-specific phosphorylation dynamics in signaling networks.</title>
        <authorList>
            <person name="Olsen J.V."/>
            <person name="Blagoev B."/>
            <person name="Gnad F."/>
            <person name="Macek B."/>
            <person name="Kumar C."/>
            <person name="Mortensen P."/>
            <person name="Mann M."/>
        </authorList>
    </citation>
    <scope>PHOSPHORYLATION [LARGE SCALE ANALYSIS] AT THR-266</scope>
    <scope>IDENTIFICATION BY MASS SPECTROMETRY [LARGE SCALE ANALYSIS]</scope>
    <source>
        <tissue>Cervix carcinoma</tissue>
    </source>
</reference>
<reference key="12">
    <citation type="journal article" date="2007" name="Cell Cycle">
        <title>LINC, a human complex that is related to pRB-containing complexes in invertebrates regulates the expression of G2/M genes.</title>
        <authorList>
            <person name="Schmit F."/>
            <person name="Korenjak M."/>
            <person name="Mannefeld M."/>
            <person name="Schmitt K."/>
            <person name="Franke C."/>
            <person name="von Eyss B."/>
            <person name="Gagrica S."/>
            <person name="Haenel F."/>
            <person name="Brehm A."/>
            <person name="Gaubatz S."/>
        </authorList>
    </citation>
    <scope>IDENTIFICATION IN THE DREAM COMPLEX</scope>
</reference>
<reference key="13">
    <citation type="journal article" date="2007" name="Mol. Cell">
        <title>Evolutionarily conserved multisubunit RBL2/p130 and E2F4 protein complex represses human cell cycle-dependent genes in quiescence.</title>
        <authorList>
            <person name="Litovchick L."/>
            <person name="Sadasivam S."/>
            <person name="Florens L."/>
            <person name="Zhu X."/>
            <person name="Swanson S.K."/>
            <person name="Velmurugan S."/>
            <person name="Chen R."/>
            <person name="Washburn M.P."/>
            <person name="Liu X.S."/>
            <person name="DeCaprio J.A."/>
        </authorList>
    </citation>
    <scope>IDENTIFICATION IN THE DREAM COMPLEX</scope>
</reference>
<reference key="14">
    <citation type="journal article" date="2009" name="Anal. Chem.">
        <title>Lys-N and trypsin cover complementary parts of the phosphoproteome in a refined SCX-based approach.</title>
        <authorList>
            <person name="Gauci S."/>
            <person name="Helbig A.O."/>
            <person name="Slijper M."/>
            <person name="Krijgsveld J."/>
            <person name="Heck A.J."/>
            <person name="Mohammed S."/>
        </authorList>
    </citation>
    <scope>IDENTIFICATION BY MASS SPECTROMETRY [LARGE SCALE ANALYSIS]</scope>
</reference>
<reference key="15">
    <citation type="journal article" date="2009" name="Sci. Signal.">
        <title>Quantitative phosphoproteomic analysis of T cell receptor signaling reveals system-wide modulation of protein-protein interactions.</title>
        <authorList>
            <person name="Mayya V."/>
            <person name="Lundgren D.H."/>
            <person name="Hwang S.-I."/>
            <person name="Rezaul K."/>
            <person name="Wu L."/>
            <person name="Eng J.K."/>
            <person name="Rodionov V."/>
            <person name="Han D.K."/>
        </authorList>
    </citation>
    <scope>PHOSPHORYLATION [LARGE SCALE ANALYSIS] AT SER-241</scope>
    <scope>IDENTIFICATION BY MASS SPECTROMETRY [LARGE SCALE ANALYSIS]</scope>
    <source>
        <tissue>Leukemic T-cell</tissue>
    </source>
</reference>
<reference key="16">
    <citation type="journal article" date="2010" name="Sci. Signal.">
        <title>Quantitative phosphoproteomics reveals widespread full phosphorylation site occupancy during mitosis.</title>
        <authorList>
            <person name="Olsen J.V."/>
            <person name="Vermeulen M."/>
            <person name="Santamaria A."/>
            <person name="Kumar C."/>
            <person name="Miller M.L."/>
            <person name="Jensen L.J."/>
            <person name="Gnad F."/>
            <person name="Cox J."/>
            <person name="Jensen T.S."/>
            <person name="Nigg E.A."/>
            <person name="Brunak S."/>
            <person name="Mann M."/>
        </authorList>
    </citation>
    <scope>PHOSPHORYLATION [LARGE SCALE ANALYSIS] AT SER-241</scope>
    <scope>IDENTIFICATION BY MASS SPECTROMETRY [LARGE SCALE ANALYSIS]</scope>
    <source>
        <tissue>Cervix carcinoma</tissue>
    </source>
</reference>
<reference key="17">
    <citation type="journal article" date="2011" name="Sci. Signal.">
        <title>System-wide temporal characterization of the proteome and phosphoproteome of human embryonic stem cell differentiation.</title>
        <authorList>
            <person name="Rigbolt K.T."/>
            <person name="Prokhorova T.A."/>
            <person name="Akimov V."/>
            <person name="Henningsen J."/>
            <person name="Johansen P.T."/>
            <person name="Kratchmarova I."/>
            <person name="Kassem M."/>
            <person name="Mann M."/>
            <person name="Olsen J.V."/>
            <person name="Blagoev B."/>
        </authorList>
    </citation>
    <scope>PHOSPHORYLATION [LARGE SCALE ANALYSIS] AT SER-241</scope>
    <scope>IDENTIFICATION BY MASS SPECTROMETRY [LARGE SCALE ANALYSIS]</scope>
</reference>
<reference key="18">
    <citation type="journal article" date="2013" name="J. Proteome Res.">
        <title>Toward a comprehensive characterization of a human cancer cell phosphoproteome.</title>
        <authorList>
            <person name="Zhou H."/>
            <person name="Di Palma S."/>
            <person name="Preisinger C."/>
            <person name="Peng M."/>
            <person name="Polat A.N."/>
            <person name="Heck A.J."/>
            <person name="Mohammed S."/>
        </authorList>
    </citation>
    <scope>PHOSPHORYLATION [LARGE SCALE ANALYSIS] AT SER-241; SER-282; SER-393 AND THR-505</scope>
    <scope>IDENTIFICATION BY MASS SPECTROMETRY [LARGE SCALE ANALYSIS]</scope>
    <source>
        <tissue>Cervix carcinoma</tissue>
        <tissue>Erythroleukemia</tissue>
    </source>
</reference>
<reference key="19">
    <citation type="journal article" date="2014" name="Nat. Struct. Mol. Biol.">
        <title>Uncovering global SUMOylation signaling networks in a site-specific manner.</title>
        <authorList>
            <person name="Hendriks I.A."/>
            <person name="D'Souza R.C."/>
            <person name="Yang B."/>
            <person name="Verlaan-de Vries M."/>
            <person name="Mann M."/>
            <person name="Vertegaal A.C."/>
        </authorList>
    </citation>
    <scope>SUMOYLATION [LARGE SCALE ANALYSIS] AT LYS-197; LYS-509; LYS-546 AND LYS-639</scope>
    <scope>IDENTIFICATION BY MASS SPECTROMETRY [LARGE SCALE ANALYSIS]</scope>
</reference>
<reference key="20">
    <citation type="journal article" date="2015" name="Cell Rep.">
        <title>SUMO-2 orchestrates chromatin modifiers in response to DNA damage.</title>
        <authorList>
            <person name="Hendriks I.A."/>
            <person name="Treffers L.W."/>
            <person name="Verlaan-de Vries M."/>
            <person name="Olsen J.V."/>
            <person name="Vertegaal A.C."/>
        </authorList>
    </citation>
    <scope>SUMOYLATION [LARGE SCALE ANALYSIS] AT LYS-197; LYS-509; LYS-596 AND LYS-639</scope>
    <scope>IDENTIFICATION BY MASS SPECTROMETRY [LARGE SCALE ANALYSIS]</scope>
</reference>
<reference key="21">
    <citation type="journal article" date="2015" name="Nat. Commun.">
        <title>Cyclin F suppresses B-Myb activity to promote cell cycle checkpoint control.</title>
        <authorList>
            <person name="Klein D.K."/>
            <person name="Hoffmann S."/>
            <person name="Ahlskog J.K."/>
            <person name="O'Hanlon K."/>
            <person name="Quaas M."/>
            <person name="Larsen B.D."/>
            <person name="Rolland B."/>
            <person name="Roesner H.I."/>
            <person name="Walter D."/>
            <person name="Kousholt A.N."/>
            <person name="Menzel T."/>
            <person name="Lees M."/>
            <person name="Johansen J.V."/>
            <person name="Rappsilber J."/>
            <person name="Engeland K."/>
            <person name="Soerensen C.S."/>
        </authorList>
    </citation>
    <scope>INTERACTION WITH CCNF</scope>
</reference>
<reference key="22">
    <citation type="journal article" date="2017" name="Nat. Struct. Mol. Biol.">
        <title>Site-specific mapping of the human SUMO proteome reveals co-modification with phosphorylation.</title>
        <authorList>
            <person name="Hendriks I.A."/>
            <person name="Lyon D."/>
            <person name="Young C."/>
            <person name="Jensen L.J."/>
            <person name="Vertegaal A.C."/>
            <person name="Nielsen M.L."/>
        </authorList>
    </citation>
    <scope>SUMOYLATION [LARGE SCALE ANALYSIS] AT LYS-104; LYS-194; LYS-197; LYS-275; LYS-411; LYS-447; LYS-482; LYS-499; LYS-509; LYS-523; LYS-533; LYS-546; LYS-584; LYS-596; LYS-625; LYS-639 AND LYS-648</scope>
    <scope>IDENTIFICATION BY MASS SPECTROMETRY [LARGE SCALE ANALYSIS]</scope>
</reference>
<protein>
    <recommendedName>
        <fullName>Myb-related protein B</fullName>
        <shortName>B-Myb</shortName>
    </recommendedName>
    <alternativeName>
        <fullName>Myb-like protein 2</fullName>
    </alternativeName>
</protein>